<name>GLON_GLAL2</name>
<evidence type="ECO:0000256" key="1">
    <source>
        <dbReference type="SAM" id="MobiDB-lite"/>
    </source>
</evidence>
<evidence type="ECO:0000269" key="2">
    <source>
    </source>
</evidence>
<evidence type="ECO:0000269" key="3">
    <source>
    </source>
</evidence>
<evidence type="ECO:0000269" key="4">
    <source>
    </source>
</evidence>
<evidence type="ECO:0000269" key="5">
    <source>
    </source>
</evidence>
<evidence type="ECO:0000269" key="6">
    <source>
    </source>
</evidence>
<evidence type="ECO:0000303" key="7">
    <source>
    </source>
</evidence>
<evidence type="ECO:0000303" key="8">
    <source>
    </source>
</evidence>
<evidence type="ECO:0000303" key="9">
    <source>
    </source>
</evidence>
<evidence type="ECO:0000305" key="10"/>
<evidence type="ECO:0000305" key="11">
    <source>
    </source>
</evidence>
<evidence type="ECO:0000305" key="12">
    <source>
    </source>
</evidence>
<comment type="function">
    <text evidence="2 3 4 5 6 9">Probable thioesterase; part of the gene cluster that mediates the biosynthesis of pneumocandins, lipohexapeptides of the echinocandin family that prevent fungal cell wall formation by non-competitive inhibition of beta-1,3-glucan synthase (PubMed:27705900). The 10,12-dimethylmyristoyl side chain is synthesized by the reducing polyketide synthase gloL/GLPKS4 (PubMed:27494047). The thioesterase gloN/GLHYD exclusively interacts with gloL/GLPKS4 to maintain turnover of the polyketide side chain (PubMed:27494047). The 10R,12S-dimethylmyristic acid is then transferred to the first thiolation domain of the nonribosomal peptide synthetase gloA/GLNRPS4 by the acyl-AMP ligase gloD/GLligase, followed by its acylation to L-ornithine to trigger elongation of the cyclic hexapeptide (PubMed:27494047). L-ornithine, 4R-hydroxyl-L-proline (generated from L-proline by the dioxygenase gloF/GLOXY2), 3S-hydroxyl-L-homotyrosine (generated by gloG/GLHtyB, gloH/GLHtyA, gloI/GLHtyC, gloJ/GLHtyD and hydroxylated at C-3 by the dioxygenase gloM/GLOXY1), 3R-hydroxyl-L-glutamine (generated from L-glutamine probably by the dioxygenase gloE/GLOXY3) and 3S-hydroxyl-L-proline (generated from L-proline by the dioxygenase gloF/GLOXY2 to yield pneumocandin B0), or 3S-hydroxyl-4S-methyl-L-proline (generated from L-leucine by the dioxygenase gloC/GLOXY4 to yield pneumocandin A0) are sequentially added to the growing chain (PubMed:25270390, PubMed:25527531, PubMed:25879325). The last C domain of gloA/GLNRPS4 is proposed to be responsible for cyclization by condensation to form the peptide bond between L-ornithine and 3S-hydroxyl-4S-methyl-L-proline (for pneumocandin A0) or 3S-hydroxyl-L-proline (for pneumocandin B0). Finally, the subsequent C-4 hydroxylation of 3S-hydroxyl-L-homotyrosine and L-ornithine dihydroxylation at C-4 and C-5 are performed by the cytochrome P450 monooxygenases gloP/GLP450-1 and gloO/GLP450-2, respectively (PubMed:25879325).</text>
</comment>
<comment type="pathway">
    <text evidence="5 11">Mycotoxin biosynthesis.</text>
</comment>
<comment type="disruption phenotype">
    <text evidence="5">Significantly decreases pneumocandin production (PubMed:27494047).</text>
</comment>
<comment type="biotechnology">
    <text evidence="3 4 5">Pneumocandin B0 is the starting molecule for the first semisynthetic echinocandin antifungal drug, caspofungin acetate (PubMed:25527531). Pneumocandin B0 is a minor fermentation product, and its industrial production was achieved by a combination of extensive mutation and medium optimization (PubMed:25527531). Inactivation of three of gloP/GLP450-1, gloO/GLP450-2, and gloM/GLOXY1 generates 13 different pneumocandin analogs that lack one, two, three, or four hydroxyl groups on 4R,5R-dihydroxy-ornithine and 3S,4S-dihydroxy-homotyrosine of the parent hexapeptide (PubMed:25879325). All of these cyclic lipopeptides show potent antifungal activities, and two new metabolites pneumocandins F and G are more potent in vitro against Candida species and Aspergillus fumigatus than the principal fermentation products, pneumocandins A0 and B0 (PubMed:25879325). Moreover, feeding alternative side chain precursors yields acrophiarin and 4 additional pneumocandin congeners with straight C14, C15, and C16 side chains. One of those compounds, pneumocandin I, has elevated antifungal activity and similar hemolytic activity compared to pneumocandin B0, the starting molecule for caspofungin, demonstrating the potential for using gloD/GLligase for future engineering of new echinocandin analogs (PubMed:27494047).</text>
</comment>
<comment type="similarity">
    <text evidence="10">Belongs to the AMT4 thioesterase family.</text>
</comment>
<gene>
    <name evidence="7" type="primary">gloN</name>
    <name evidence="8" type="synonym">GLHYD</name>
    <name type="ORF">GLAREA_10032</name>
</gene>
<reference key="1">
    <citation type="journal article" date="2013" name="BMC Genomics">
        <title>Genomics-driven discovery of the pneumocandin biosynthetic gene cluster in the fungus Glarea lozoyensis.</title>
        <authorList>
            <person name="Chen L."/>
            <person name="Yue Q."/>
            <person name="Zhang X."/>
            <person name="Xiang M."/>
            <person name="Wang C."/>
            <person name="Li S."/>
            <person name="Che Y."/>
            <person name="Ortiz-Lopez F.J."/>
            <person name="Bills G.F."/>
            <person name="Liu X."/>
            <person name="An Z."/>
        </authorList>
    </citation>
    <scope>NUCLEOTIDE SEQUENCE [LARGE SCALE GENOMIC DNA]</scope>
    <scope>IDENTIFICATION</scope>
    <scope>FUNCTION</scope>
    <source>
        <strain>ATCC 20868 / MF5171</strain>
    </source>
</reference>
<reference key="2">
    <citation type="journal article" date="2014" name="ChemBioChem">
        <title>Pneumocandin biosynthesis: involvement of a trans-selective proline hydroxylase.</title>
        <authorList>
            <person name="Houwaart S."/>
            <person name="Youssar L."/>
            <person name="Huettel W."/>
        </authorList>
    </citation>
    <scope>FUNCTION</scope>
</reference>
<reference key="3">
    <citation type="journal article" date="2015" name="ACS Chem. Biol.">
        <title>Genetic manipulation of the pneumocandin biosynthetic pathway for generation of analogues and evaluation of their antifungal activity.</title>
        <authorList>
            <person name="Li Y."/>
            <person name="Chen L."/>
            <person name="Yue Q."/>
            <person name="Liu X."/>
            <person name="An Z."/>
            <person name="Bills G.F."/>
        </authorList>
    </citation>
    <scope>FUNCTION</scope>
    <scope>BIOTECHNOLOGY</scope>
</reference>
<reference key="4">
    <citation type="journal article" date="2015" name="Appl. Environ. Microbiol.">
        <title>Engineering of Glarea lozoyensis for exclusive production of the pneumocandin B0 precursor of the antifungal drug caspofungin acetate.</title>
        <authorList>
            <person name="Chen L."/>
            <person name="Yue Q."/>
            <person name="Li Y."/>
            <person name="Niu X."/>
            <person name="Xiang M."/>
            <person name="Wang W."/>
            <person name="Bills G.F."/>
            <person name="Liu X."/>
            <person name="An Z."/>
        </authorList>
    </citation>
    <scope>FUNCTION</scope>
    <scope>BIOTECHNOLOGY</scope>
</reference>
<reference key="5">
    <citation type="journal article" date="2016" name="ACS Chem. Biol.">
        <title>Engineering of new pneumocandin side-chain analogues from Glarea lozoyensis by mutasynthesis and evaluation of their antifungal activity.</title>
        <authorList>
            <person name="Chen L."/>
            <person name="Li Y."/>
            <person name="Yue Q."/>
            <person name="Loksztejn A."/>
            <person name="Yokoyama K."/>
            <person name="Felix E.A."/>
            <person name="Liu X."/>
            <person name="Zhang N."/>
            <person name="An Z."/>
            <person name="Bills G.F."/>
        </authorList>
    </citation>
    <scope>FUNCTION</scope>
    <scope>DISRUPTION PHENOTYPE</scope>
    <scope>PATHWAY</scope>
    <scope>BIOTECHNOLOGY</scope>
</reference>
<reference key="6">
    <citation type="journal article" date="2018" name="Appl. Environ. Microbiol.">
        <title>Cryptic production of trans-3-hydroxyproline in echinocandin B biosynthesis.</title>
        <authorList>
            <person name="Mattay J."/>
            <person name="Houwaart S."/>
            <person name="Huettel W."/>
        </authorList>
    </citation>
    <scope>FUNCTION</scope>
</reference>
<reference key="7">
    <citation type="journal article" date="2017" name="Z. Naturforsch. C">
        <title>Structural diversity in echinocandin biosynthesis: the impact of oxidation steps and approaches toward an evolutionary explanation.</title>
        <authorList>
            <person name="Huettel W."/>
        </authorList>
    </citation>
    <scope>REVIEW</scope>
</reference>
<dbReference type="EC" id="3.1.-.-" evidence="12"/>
<dbReference type="EMBL" id="KE145356">
    <property type="protein sequence ID" value="EPE34338.1"/>
    <property type="molecule type" value="Genomic_DNA"/>
</dbReference>
<dbReference type="RefSeq" id="XP_008078273.1">
    <property type="nucleotide sequence ID" value="XM_008080082.1"/>
</dbReference>
<dbReference type="SMR" id="S3E7P4"/>
<dbReference type="ESTHER" id="glal2-glon">
    <property type="family name" value="Thioesterase"/>
</dbReference>
<dbReference type="GeneID" id="19469079"/>
<dbReference type="KEGG" id="glz:GLAREA_10032"/>
<dbReference type="eggNOG" id="ENOG502S3GI">
    <property type="taxonomic scope" value="Eukaryota"/>
</dbReference>
<dbReference type="HOGENOM" id="CLU_066049_0_0_1"/>
<dbReference type="OMA" id="GNHYSIF"/>
<dbReference type="OrthoDB" id="10253869at2759"/>
<dbReference type="Proteomes" id="UP000016922">
    <property type="component" value="Unassembled WGS sequence"/>
</dbReference>
<dbReference type="GO" id="GO:0016787">
    <property type="term" value="F:hydrolase activity"/>
    <property type="evidence" value="ECO:0007669"/>
    <property type="project" value="UniProtKB-KW"/>
</dbReference>
<dbReference type="GO" id="GO:0009058">
    <property type="term" value="P:biosynthetic process"/>
    <property type="evidence" value="ECO:0007669"/>
    <property type="project" value="InterPro"/>
</dbReference>
<dbReference type="Gene3D" id="3.40.50.1820">
    <property type="entry name" value="alpha/beta hydrolase"/>
    <property type="match status" value="1"/>
</dbReference>
<dbReference type="InterPro" id="IPR029058">
    <property type="entry name" value="AB_hydrolase_fold"/>
</dbReference>
<dbReference type="InterPro" id="IPR001031">
    <property type="entry name" value="Thioesterase"/>
</dbReference>
<dbReference type="Pfam" id="PF00975">
    <property type="entry name" value="Thioesterase"/>
    <property type="match status" value="1"/>
</dbReference>
<dbReference type="SUPFAM" id="SSF53474">
    <property type="entry name" value="alpha/beta-Hydrolases"/>
    <property type="match status" value="1"/>
</dbReference>
<sequence>MDQNPILIQRHHHRQNFAQKAPPAPLFLIHDGGGTVFSYFLLESLGRTVYGISNPNFETESTWENGIASMAEYYVNLIKATYPSGHILLGGWSLGGLIAIQAAHILSNDPELKVVGIVMIDSTFPVEGQFNKARRLAFMAETSTSPDMKEKTRKCMDEARIQSREWKAPSWRSSATETLDNHSQTINVQIHDHVTPTCPPTVLIRALDDGSNNSRDLNETSPTETSNDSETQALGFDRYQNFNLRYVVNTPGDHFSIFNKENVKELSKKVKEACDKLVMKS</sequence>
<keyword id="KW-0378">Hydrolase</keyword>
<keyword id="KW-1185">Reference proteome</keyword>
<accession>S3E7P4</accession>
<feature type="chain" id="PRO_0000444488" description="Probable thioesterase gloN">
    <location>
        <begin position="1"/>
        <end position="281"/>
    </location>
</feature>
<feature type="region of interest" description="Disordered" evidence="1">
    <location>
        <begin position="207"/>
        <end position="233"/>
    </location>
</feature>
<feature type="compositionally biased region" description="Polar residues" evidence="1">
    <location>
        <begin position="210"/>
        <end position="232"/>
    </location>
</feature>
<proteinExistence type="evidence at protein level"/>
<protein>
    <recommendedName>
        <fullName evidence="7">Probable thioesterase gloN</fullName>
        <ecNumber evidence="12">3.1.-.-</ecNumber>
    </recommendedName>
    <alternativeName>
        <fullName evidence="7">Pneumocandin biosynthesis cluster protein N</fullName>
    </alternativeName>
</protein>
<organism>
    <name type="scientific">Glarea lozoyensis (strain ATCC 20868 / MF5171)</name>
    <dbReference type="NCBI Taxonomy" id="1116229"/>
    <lineage>
        <taxon>Eukaryota</taxon>
        <taxon>Fungi</taxon>
        <taxon>Dikarya</taxon>
        <taxon>Ascomycota</taxon>
        <taxon>Pezizomycotina</taxon>
        <taxon>Leotiomycetes</taxon>
        <taxon>Helotiales</taxon>
        <taxon>Helotiaceae</taxon>
        <taxon>Glarea</taxon>
    </lineage>
</organism>